<sequence length="62" mass="6859">MGIDKRAEATAKDVQGKAQEAWGDLTDDPKLELEGKAKQVEASAEHKKEDLKDQAHRTIDNV</sequence>
<accession>Q7NPL5</accession>
<reference key="1">
    <citation type="journal article" date="2003" name="DNA Res.">
        <title>Complete genome structure of Gloeobacter violaceus PCC 7421, a cyanobacterium that lacks thylakoids.</title>
        <authorList>
            <person name="Nakamura Y."/>
            <person name="Kaneko T."/>
            <person name="Sato S."/>
            <person name="Mimuro M."/>
            <person name="Miyashita H."/>
            <person name="Tsuchiya T."/>
            <person name="Sasamoto S."/>
            <person name="Watanabe A."/>
            <person name="Kawashima K."/>
            <person name="Kishida Y."/>
            <person name="Kiyokawa C."/>
            <person name="Kohara M."/>
            <person name="Matsumoto M."/>
            <person name="Matsuno A."/>
            <person name="Nakazaki N."/>
            <person name="Shimpo S."/>
            <person name="Takeuchi C."/>
            <person name="Yamada M."/>
            <person name="Tabata S."/>
        </authorList>
    </citation>
    <scope>NUCLEOTIDE SEQUENCE [LARGE SCALE GENOMIC DNA]</scope>
    <source>
        <strain>ATCC 29082 / PCC 7421</strain>
    </source>
</reference>
<proteinExistence type="inferred from homology"/>
<organism>
    <name type="scientific">Gloeobacter violaceus (strain ATCC 29082 / PCC 7421)</name>
    <dbReference type="NCBI Taxonomy" id="251221"/>
    <lineage>
        <taxon>Bacteria</taxon>
        <taxon>Bacillati</taxon>
        <taxon>Cyanobacteriota</taxon>
        <taxon>Cyanophyceae</taxon>
        <taxon>Gloeobacterales</taxon>
        <taxon>Gloeobacteraceae</taxon>
        <taxon>Gloeobacter</taxon>
    </lineage>
</organism>
<evidence type="ECO:0000256" key="1">
    <source>
        <dbReference type="SAM" id="MobiDB-lite"/>
    </source>
</evidence>
<evidence type="ECO:0000305" key="2"/>
<feature type="chain" id="PRO_0000210004" description="UPF0337 protein gsr0040">
    <location>
        <begin position="1"/>
        <end position="62"/>
    </location>
</feature>
<feature type="region of interest" description="Disordered" evidence="1">
    <location>
        <begin position="1"/>
        <end position="62"/>
    </location>
</feature>
<feature type="compositionally biased region" description="Basic and acidic residues" evidence="1">
    <location>
        <begin position="1"/>
        <end position="15"/>
    </location>
</feature>
<feature type="compositionally biased region" description="Basic and acidic residues" evidence="1">
    <location>
        <begin position="27"/>
        <end position="62"/>
    </location>
</feature>
<keyword id="KW-1185">Reference proteome</keyword>
<comment type="similarity">
    <text evidence="2">Belongs to the UPF0337 (CsbD) family.</text>
</comment>
<name>Y040_GLOVI</name>
<gene>
    <name type="ordered locus">gsr0040</name>
</gene>
<dbReference type="EMBL" id="BA000045">
    <property type="protein sequence ID" value="BAC87981.1"/>
    <property type="molecule type" value="Genomic_DNA"/>
</dbReference>
<dbReference type="RefSeq" id="NP_922986.1">
    <property type="nucleotide sequence ID" value="NC_005125.1"/>
</dbReference>
<dbReference type="RefSeq" id="WP_011140044.1">
    <property type="nucleotide sequence ID" value="NC_005125.1"/>
</dbReference>
<dbReference type="SMR" id="Q7NPL5"/>
<dbReference type="STRING" id="251221.gene:10757509"/>
<dbReference type="EnsemblBacteria" id="BAC87981">
    <property type="protein sequence ID" value="BAC87981"/>
    <property type="gene ID" value="BAC87981"/>
</dbReference>
<dbReference type="KEGG" id="gvi:gsr0040"/>
<dbReference type="PATRIC" id="fig|251221.4.peg.42"/>
<dbReference type="eggNOG" id="COG3237">
    <property type="taxonomic scope" value="Bacteria"/>
</dbReference>
<dbReference type="HOGENOM" id="CLU_135567_1_0_3"/>
<dbReference type="InParanoid" id="Q7NPL5"/>
<dbReference type="OrthoDB" id="465089at2"/>
<dbReference type="PhylomeDB" id="Q7NPL5"/>
<dbReference type="Proteomes" id="UP000000557">
    <property type="component" value="Chromosome"/>
</dbReference>
<dbReference type="Gene3D" id="1.10.1470.10">
    <property type="entry name" value="YjbJ"/>
    <property type="match status" value="1"/>
</dbReference>
<dbReference type="InterPro" id="IPR008462">
    <property type="entry name" value="CsbD"/>
</dbReference>
<dbReference type="InterPro" id="IPR036629">
    <property type="entry name" value="YjbJ_sf"/>
</dbReference>
<dbReference type="Pfam" id="PF05532">
    <property type="entry name" value="CsbD"/>
    <property type="match status" value="1"/>
</dbReference>
<dbReference type="SUPFAM" id="SSF69047">
    <property type="entry name" value="Hypothetical protein YjbJ"/>
    <property type="match status" value="1"/>
</dbReference>
<protein>
    <recommendedName>
        <fullName>UPF0337 protein gsr0040</fullName>
    </recommendedName>
</protein>